<organism>
    <name type="scientific">Homo sapiens</name>
    <name type="common">Human</name>
    <dbReference type="NCBI Taxonomy" id="9606"/>
    <lineage>
        <taxon>Eukaryota</taxon>
        <taxon>Metazoa</taxon>
        <taxon>Chordata</taxon>
        <taxon>Craniata</taxon>
        <taxon>Vertebrata</taxon>
        <taxon>Euteleostomi</taxon>
        <taxon>Mammalia</taxon>
        <taxon>Eutheria</taxon>
        <taxon>Euarchontoglires</taxon>
        <taxon>Primates</taxon>
        <taxon>Haplorrhini</taxon>
        <taxon>Catarrhini</taxon>
        <taxon>Hominidae</taxon>
        <taxon>Homo</taxon>
    </lineage>
</organism>
<sequence>MAHRCLRLWGRGGCWPRGLQQLLVPGGVGPGEQPCLRTLYRFVTTQARASRNSLLTDIIAAYQRFCSRPPKGFEKYFPNGKNGKKASEPKEVMGEKKESKPAATTRSSGGGGGGGGKRGGKKDDSHWWSRFQKGDIPWDDKDFRMFFLWTALFWGGVMFYLLLKRSGREITWKDFVNNYLSKGVVDRLEVVNKRFVRVTFTPGKTPVDGQYVWFNIGSVDTFERNLETLQQELGIEGENRVPVVYIAESDGSFLLSMLPTVLIIAFLLYTIRRGPAGIGRTGRGMGGLFSVGETTAKVLKDEIDVKFKDVAGCEEAKLEIMEFVNFLKNPKQYQDLGAKIPKGAILTGPPGTGKTLLAKATAGEANVPFITVSGSEFLEMFVGVGPARVRDLFALARKNAPCILFIDEIDAVGRKRGRGNFGGQSEQENTLNQLLVEMDGFNTTTNVVILAGTNRPDILDPALLRPGRFDRQIFIGPPDIKGRASIFKVHLRPLKLDSTLEKDKLARKLASLTPGFSGADVANVCNEAALIAARHLSDSINQKHFEQAIERVIGGLEKKTQVLQPEEKKTVAYHEAGHAVAGWYLEHADPLLKVSIIPRGKGLGYAQYLPKEQYLYTKEQLLDRMCMTLGGRVSEEIFFGRITTGAQDDLRKVTQSAYAQIVQFGMNEKVGQISFDLPRQGDMVLEKPYSEATARLIDDEVRILINDAYKRTVALLTEKKADVEKVALLLLEKEVLDKNDMVELLGPRPFAEKSTYEEFVEGTGSLDEDTSLPEGLKDWNKEREKEKEEPPGEKVAN</sequence>
<comment type="function">
    <text evidence="6 7 12 19 24 25 30 31 32 33 35 38 39 40 41 42">Catalytic component of the m-AAA protease, a protease that plays a key role in proteostasis of inner mitochondrial membrane proteins, and which is essential for axonal and neuron development (PubMed:19748354, PubMed:28396416, PubMed:29932645, PubMed:30683687, PubMed:31327635, PubMed:37917749, PubMed:38157846). AFG3L2 possesses both ATPase and protease activities: the ATPase activity is required to unfold substrates, threading them into the internal proteolytic cavity for hydrolysis into small peptide fragments (PubMed:19748354, PubMed:31327635). The m-AAA protease carries out quality control in the inner membrane of the mitochondria by mediating degradation of mistranslated or misfolded polypeptides (PubMed:26504172, PubMed:30683687, PubMed:34718584). The m-AAA protease complex also promotes the processing and maturation of mitochondrial proteins, such as MRPL32/bL32m, PINK1 and SP7 (PubMed:22354088, PubMed:29932645, PubMed:30252181). Mediates protein maturation of the mitochondrial ribosomal subunit MRPL32/bL32m by catalyzing the cleavage of the presequence of MRPL32/bL32m prior to assembly into the mitochondrial ribosome (PubMed:29932645). Required for SPG7 maturation into its active mature form after SPG7 cleavage by mitochondrial-processing peptidase (MPP) (PubMed:30252181). Required for the maturation of PINK1 into its 52kDa mature form after its cleavage by mitochondrial-processing peptidase (MPP) (PubMed:22354088). Acts as a regulator of calcium in neurons by mediating degradation of SMDT1/EMRE before its assembly with the uniporter complex, limiting the availability of SMDT1/EMRE for MCU assembly and promoting efficient assembly of gatekeeper subunits with MCU (PubMed:27642048, PubMed:28396416). Promotes the proteolytic degradation of GHITM upon hyperpolarization of mitochondria: progressive GHITM degradation leads to respiratory complex I degradation and broad reshaping of the mitochondrial proteome by AFG3L2 (PubMed:35912435). Also acts as a regulator of mitochondrial glutathione homeostasis by mediating cleavage and degradation of SLC25A39 (PubMed:37917749, PubMed:38157846). SLC25A39 cleavage is prevented when SLC25A39 binds iron-sulfur (PubMed:37917749, PubMed:38157846). Involved in the regulation of OMA1-dependent processing of OPA1 (PubMed:17615298, PubMed:29545505, PubMed:30252181, PubMed:30683687, PubMed:32600459). May act by mediating processing of OMA1 precursor, participating in OMA1 maturation (PubMed:29545505).</text>
</comment>
<comment type="catalytic activity">
    <reaction evidence="7">
        <text>ATP + H2O = ADP + phosphate + H(+)</text>
        <dbReference type="Rhea" id="RHEA:13065"/>
        <dbReference type="ChEBI" id="CHEBI:15377"/>
        <dbReference type="ChEBI" id="CHEBI:15378"/>
        <dbReference type="ChEBI" id="CHEBI:30616"/>
        <dbReference type="ChEBI" id="CHEBI:43474"/>
        <dbReference type="ChEBI" id="CHEBI:456216"/>
    </reaction>
    <physiologicalReaction direction="left-to-right" evidence="7">
        <dbReference type="Rhea" id="RHEA:13066"/>
    </physiologicalReaction>
</comment>
<comment type="cofactor">
    <cofactor evidence="35">
        <name>Zn(2+)</name>
        <dbReference type="ChEBI" id="CHEBI:29105"/>
    </cofactor>
    <text evidence="35">Binds 1 zinc ion per subunit.</text>
</comment>
<comment type="subunit">
    <text evidence="1 4 5 13 17 23 24 25 31 32 35">Homohexamer (PubMed:24055473, PubMed:29932645, PubMed:31327635). Forms heterohexamers with SPG7 (PubMed:14623864, PubMed:17101804, PubMed:26387735, PubMed:28396416, PubMed:30252181). The m-AAA protease is either composed of homohexamers of AFG3L2 or heterohexamers of AFG3L2 and SPG7 (PubMed:17101804, PubMed:28396416). Interacts with MAIP1 (PubMed:27499296, PubMed:27642048). Interacts with DNAJC19 (By similarity). Interacts with PHB2 (By similarity).</text>
</comment>
<comment type="interaction">
    <interactant intactId="EBI-358755">
        <id>Q9Y4W6</id>
    </interactant>
    <interactant intactId="EBI-466029">
        <id>P42858</id>
        <label>HTT</label>
    </interactant>
    <organismsDiffer>false</organismsDiffer>
    <experiments>3</experiments>
</comment>
<comment type="subcellular location">
    <subcellularLocation>
        <location evidence="45 46 47">Mitochondrion inner membrane</location>
        <topology evidence="2">Multi-pass membrane protein</topology>
    </subcellularLocation>
</comment>
<comment type="tissue specificity">
    <text evidence="8">Ubiquitous. Highly expressed in the cerebellar Purkinje cells.</text>
</comment>
<comment type="PTM">
    <text evidence="32">Upon import into the mitochondrion, the N-terminal transit peptide is cleaved to generate an intermediate form which undergoes autocatalytic proteolytic processing to generate the proteolytically active mature form.</text>
</comment>
<comment type="disease" evidence="8 9 10 14 15 16 18 21 22 27 28 32 34 35">
    <disease id="DI-02675">
        <name>Spinocerebellar ataxia 28</name>
        <acronym>SCA28</acronym>
        <description>Spinocerebellar ataxia is a clinically and genetically heterogeneous group of cerebellar disorders. Patients show progressive incoordination of gait and often poor coordination of hands, speech and eye movements, due to degeneration of the cerebellum with variable involvement of the brainstem and spinal cord. SCA28 is an autosomal dominant cerebellar ataxia (ADCA) with a slow progressive course and no evidence of sensory involvement or cognitive impairment.</description>
        <dbReference type="MIM" id="610246"/>
    </disease>
    <text>The disease is caused by variants affecting the gene represented in this entry.</text>
</comment>
<comment type="disease" evidence="11 36">
    <disease id="DI-03374">
        <name>Spastic ataxia 5, autosomal recessive</name>
        <acronym>SPAX5</acronym>
        <description>A neurodegenerative disorder characterized by early onset spasticity, peripheral neuropathy, ptosis, oculomotor apraxia, dystonia, cerebellar atrophy, and progressive myoclonic epilepsy.</description>
        <dbReference type="MIM" id="614487"/>
    </disease>
    <text>The disease is caused by variants affecting the gene represented in this entry.</text>
</comment>
<comment type="disease" evidence="20 29 32 36 37 38">
    <disease id="DI-05893">
        <name>Optic atrophy 12</name>
        <acronym>OPA12</acronym>
        <description>An autosomal dominant disease characterized by progressive visual loss in association with optic atrophy. Atrophy of the optic disk indicates a deficiency in the number of nerve fibers which arise in the retina and converge to form the optic disk, optic nerve, optic chiasm and optic tracts. OPA12 patients manifest slowly progressive visual impairment with onset usually in the first decade. Some patients may exhibit additional features including impaired intellectual development, dystonia, movement disorders, or ataxia.</description>
        <dbReference type="MIM" id="618977"/>
    </disease>
    <text>The disease is caused by variants affecting the gene represented in this entry.</text>
</comment>
<comment type="similarity">
    <text evidence="44">In the N-terminal section; belongs to the AAA ATPase family.</text>
</comment>
<comment type="similarity">
    <text evidence="44">In the C-terminal section; belongs to the peptidase M41 family.</text>
</comment>
<keyword id="KW-0002">3D-structure</keyword>
<keyword id="KW-0067">ATP-binding</keyword>
<keyword id="KW-0225">Disease variant</keyword>
<keyword id="KW-0378">Hydrolase</keyword>
<keyword id="KW-0472">Membrane</keyword>
<keyword id="KW-0479">Metal-binding</keyword>
<keyword id="KW-0482">Metalloprotease</keyword>
<keyword id="KW-0496">Mitochondrion</keyword>
<keyword id="KW-0999">Mitochondrion inner membrane</keyword>
<keyword id="KW-0523">Neurodegeneration</keyword>
<keyword id="KW-0547">Nucleotide-binding</keyword>
<keyword id="KW-0645">Protease</keyword>
<keyword id="KW-1267">Proteomics identification</keyword>
<keyword id="KW-1185">Reference proteome</keyword>
<keyword id="KW-0950">Spinocerebellar ataxia</keyword>
<keyword id="KW-0809">Transit peptide</keyword>
<keyword id="KW-0812">Transmembrane</keyword>
<keyword id="KW-1133">Transmembrane helix</keyword>
<keyword id="KW-0862">Zinc</keyword>
<feature type="transit peptide" description="Mitochondrion" evidence="1">
    <location>
        <begin position="1"/>
        <end position="38"/>
    </location>
</feature>
<feature type="propeptide" id="PRO_0000442311" description="Removed in mature form" evidence="1">
    <location>
        <begin position="39"/>
        <end position="66"/>
    </location>
</feature>
<feature type="chain" id="PRO_0000442312" description="Mitochondrial inner membrane m-AAA protease component AFG3L2">
    <location>
        <begin position="67"/>
        <end position="797"/>
    </location>
</feature>
<feature type="topological domain" description="Mitochondrial matrix" evidence="47">
    <location>
        <begin position="39"/>
        <end position="142"/>
    </location>
</feature>
<feature type="transmembrane region" description="Helical" evidence="2">
    <location>
        <begin position="143"/>
        <end position="163"/>
    </location>
</feature>
<feature type="topological domain" description="Mitochondrial intermembrane" evidence="47">
    <location>
        <begin position="164"/>
        <end position="250"/>
    </location>
</feature>
<feature type="transmembrane region" description="Helical" evidence="2">
    <location>
        <begin position="251"/>
        <end position="271"/>
    </location>
</feature>
<feature type="topological domain" description="Mitochondrial matrix" evidence="47">
    <location>
        <begin position="272"/>
        <end position="797"/>
    </location>
</feature>
<feature type="region of interest" description="Disordered" evidence="3">
    <location>
        <begin position="76"/>
        <end position="126"/>
    </location>
</feature>
<feature type="region of interest" description="Disordered" evidence="3">
    <location>
        <begin position="759"/>
        <end position="797"/>
    </location>
</feature>
<feature type="compositionally biased region" description="Basic and acidic residues" evidence="3">
    <location>
        <begin position="85"/>
        <end position="100"/>
    </location>
</feature>
<feature type="compositionally biased region" description="Gly residues" evidence="3">
    <location>
        <begin position="108"/>
        <end position="117"/>
    </location>
</feature>
<feature type="compositionally biased region" description="Basic and acidic residues" evidence="3">
    <location>
        <begin position="775"/>
        <end position="797"/>
    </location>
</feature>
<feature type="active site" evidence="47">
    <location>
        <position position="575"/>
    </location>
</feature>
<feature type="binding site" evidence="47 50">
    <location>
        <position position="310"/>
    </location>
    <ligand>
        <name>ATP</name>
        <dbReference type="ChEBI" id="CHEBI:30616"/>
    </ligand>
</feature>
<feature type="binding site" evidence="47 50">
    <location>
        <position position="311"/>
    </location>
    <ligand>
        <name>ATP</name>
        <dbReference type="ChEBI" id="CHEBI:30616"/>
    </ligand>
</feature>
<feature type="binding site" evidence="47 50">
    <location>
        <position position="352"/>
    </location>
    <ligand>
        <name>ATP</name>
        <dbReference type="ChEBI" id="CHEBI:30616"/>
    </ligand>
</feature>
<feature type="binding site" evidence="47 50">
    <location>
        <position position="353"/>
    </location>
    <ligand>
        <name>ATP</name>
        <dbReference type="ChEBI" id="CHEBI:30616"/>
    </ligand>
</feature>
<feature type="binding site" evidence="47 50">
    <location>
        <position position="354"/>
    </location>
    <ligand>
        <name>ATP</name>
        <dbReference type="ChEBI" id="CHEBI:30616"/>
    </ligand>
</feature>
<feature type="binding site" evidence="47 50">
    <location>
        <position position="355"/>
    </location>
    <ligand>
        <name>ATP</name>
        <dbReference type="ChEBI" id="CHEBI:30616"/>
    </ligand>
</feature>
<feature type="binding site" evidence="47 50">
    <location>
        <position position="356"/>
    </location>
    <ligand>
        <name>ATP</name>
        <dbReference type="ChEBI" id="CHEBI:30616"/>
    </ligand>
</feature>
<feature type="binding site" evidence="47 50">
    <location>
        <position position="490"/>
    </location>
    <ligand>
        <name>ATP</name>
        <dbReference type="ChEBI" id="CHEBI:30616"/>
    </ligand>
</feature>
<feature type="binding site" evidence="35 50">
    <location>
        <position position="574"/>
    </location>
    <ligand>
        <name>Zn(2+)</name>
        <dbReference type="ChEBI" id="CHEBI:29105"/>
        <note>catalytic</note>
    </ligand>
</feature>
<feature type="binding site" evidence="35 50">
    <location>
        <position position="578"/>
    </location>
    <ligand>
        <name>Zn(2+)</name>
        <dbReference type="ChEBI" id="CHEBI:29105"/>
        <note>catalytic</note>
    </ligand>
</feature>
<feature type="binding site" evidence="35 50">
    <location>
        <position position="649"/>
    </location>
    <ligand>
        <name>Zn(2+)</name>
        <dbReference type="ChEBI" id="CHEBI:29105"/>
        <note>catalytic</note>
    </ligand>
</feature>
<feature type="modified residue" description="N6-succinyllysine" evidence="1">
    <location>
        <position position="117"/>
    </location>
</feature>
<feature type="sequence variant" id="VAR_084603" description="In OPA12; uncertain significance." evidence="37">
    <original>E</original>
    <variation>A</variation>
    <location>
        <position position="74"/>
    </location>
</feature>
<feature type="sequence variant" id="VAR_089087" description="In SCA28; uncertain significance; dbSNP:rs1373473541." evidence="18">
    <original>V</original>
    <variation>I</variation>
    <location>
        <position position="191"/>
    </location>
</feature>
<feature type="sequence variant" id="VAR_084604" description="In SPAX5; uncertain significance; dbSNP:rs1908569446." evidence="36">
    <original>K</original>
    <variation>E</variation>
    <location>
        <position position="306"/>
    </location>
</feature>
<feature type="sequence variant" id="VAR_084605" description="In OPA12; loss-of-function variant resulting in aberrant OPA1 processing and mitochondrial fragmentation; dbSNP:rs1908566777." evidence="37 38">
    <original>G</original>
    <variation>E</variation>
    <location>
        <position position="337"/>
    </location>
</feature>
<feature type="sequence variant" id="VAR_084606" description="In OPA12." evidence="37">
    <original>G</original>
    <variation>R</variation>
    <location>
        <position position="337"/>
    </location>
</feature>
<feature type="sequence variant" id="VAR_084607" description="In OPA12; uncertain significance; dbSNP:rs755893615." evidence="36">
    <original>L</original>
    <variation>F</variation>
    <location>
        <position position="346"/>
    </location>
</feature>
<feature type="sequence variant" id="VAR_084608" description="In OPA12; uncertain significance." evidence="37">
    <original>E</original>
    <variation>K</variation>
    <location>
        <position position="376"/>
    </location>
</feature>
<feature type="sequence variant" id="VAR_084609" description="In OPA12; uncertain significance; dbSNP:rs1908507433." evidence="36">
    <original>F</original>
    <variation>S</variation>
    <location>
        <position position="377"/>
    </location>
</feature>
<feature type="sequence variant" id="VAR_084610" description="In OPA12; uncertain significance; decreased proteolytic function; dbSNP:rs1908371616." evidence="36">
    <original>D</original>
    <variation>G</variation>
    <location>
        <position position="407"/>
    </location>
</feature>
<feature type="sequence variant" id="VAR_084611" description="In OPA12; uncertain significance." evidence="37">
    <original>R</original>
    <variation>S</variation>
    <location>
        <position position="416"/>
    </location>
</feature>
<feature type="sequence variant" id="VAR_084612" description="In OPA12; uncertain significance; dbSNP:rs1908369114." evidence="36">
    <original>T</original>
    <variation>I</variation>
    <location>
        <position position="430"/>
    </location>
</feature>
<feature type="sequence variant" id="VAR_063544" description="In SCA28; abolished ability to degrade substrate proteins; dbSNP:rs151344512." evidence="8 35">
    <original>N</original>
    <variation>T</variation>
    <location>
        <position position="432"/>
    </location>
</feature>
<feature type="sequence variant" id="VAR_084613" description="In OPA12 and SPAX5; decreased proteolytic function; dbSNP:rs912546325." evidence="36">
    <original>A</original>
    <variation>V</variation>
    <location>
        <position position="462"/>
    </location>
</feature>
<feature type="sequence variant" id="VAR_084614" description="In OPA12; decreased proteolytic function; dbSNP:rs1908309088." evidence="36">
    <original>R</original>
    <variation>K</variation>
    <location>
        <position position="465"/>
    </location>
</feature>
<feature type="sequence variant" id="VAR_084615" description="In OPA12; decreased proteolytic function resulting in impaired autocatalytic processing and impaired proteolytic maturation of SPG7; does not affect the interaction with SPG7; dbSNP:rs1020764190." evidence="20 29 32">
    <original>R</original>
    <variation>C</variation>
    <location>
        <position position="468"/>
    </location>
</feature>
<feature type="sequence variant" id="VAR_084616" description="In OPA12; decreased proteolytic function; dbSNP:rs1908300748." evidence="36 37">
    <original>P</original>
    <variation>L</variation>
    <location>
        <position position="514"/>
    </location>
</feature>
<feature type="sequence variant" id="VAR_089088" description="Found in patients from a consanguineous family with progressive microcephaly, early onset seizures, spasticity and basal ganglia involvement; uncertain significance; decreased ATPase and ability to degrade substrate proteins; dbSNP:rs562861748." evidence="26 35">
    <original>A</original>
    <variation>T</variation>
    <location>
        <position position="572"/>
    </location>
</feature>
<feature type="sequence variant" id="VAR_084617" description="In OPA12; uncertain significance; dbSNP:rs773240455." evidence="36">
    <original>Y</original>
    <variation>C</variation>
    <location>
        <position position="605"/>
    </location>
</feature>
<feature type="sequence variant" id="VAR_067330" description="In SPAX5 and SCA28; hypomorphic mutation; impaired oligomerization with itself and SPG7; increased ATPase and proteolytic activities; dbSNP:rs387906889." evidence="11 34 35">
    <original>Y</original>
    <variation>C</variation>
    <location>
        <position position="616"/>
    </location>
</feature>
<feature type="sequence variant" id="VAR_084618" description="In SPAX5; impaired function shown in a yeast complementation assay; dbSNP:rs1907907851." evidence="36">
    <original>Q</original>
    <variation>K</variation>
    <location>
        <position position="620"/>
    </location>
</feature>
<feature type="sequence variant" id="VAR_080736" description="In SCA28; uncertain significance; dbSNP:rs756912142." evidence="28">
    <original>L</original>
    <variation>V</variation>
    <location>
        <position position="621"/>
    </location>
</feature>
<feature type="sequence variant" id="VAR_084619" description="In OPA12; uncertain significance; dbSNP:rs1226952405." evidence="37">
    <original>T</original>
    <variation>S</variation>
    <location>
        <position position="644"/>
    </location>
</feature>
<feature type="sequence variant" id="VAR_064402" description="In SCA28; dbSNP:rs151344513." evidence="10">
    <original>T</original>
    <variation>I</variation>
    <location>
        <position position="654"/>
    </location>
</feature>
<feature type="sequence variant" id="VAR_064403" description="In SCA28; abolished ability to degrade substrate proteins; dbSNP:rs151344515." evidence="10 35">
    <original>M</original>
    <variation>R</variation>
    <location>
        <position position="666"/>
    </location>
</feature>
<feature type="sequence variant" id="VAR_064404" description="In SCA28; dbSNP:rs151344515." evidence="10">
    <original>M</original>
    <variation>T</variation>
    <location>
        <position position="666"/>
    </location>
</feature>
<feature type="sequence variant" id="VAR_064405" description="In SCA28; dbSNP:rs151344514." evidence="10 28">
    <original>M</original>
    <variation>V</variation>
    <location>
        <position position="666"/>
    </location>
</feature>
<feature type="sequence variant" id="VAR_064406" description="In SCA28; dbSNP:rs151344518." evidence="10">
    <original>G</original>
    <variation>E</variation>
    <location>
        <position position="671"/>
    </location>
</feature>
<feature type="sequence variant" id="VAR_064407" description="In SCA28; dbSNP:rs151344517." evidence="10 27">
    <original>G</original>
    <variation>R</variation>
    <location>
        <position position="671"/>
    </location>
</feature>
<feature type="sequence variant" id="VAR_089089" description="In SCA28; uncertain significance; slightly decreased ability to degrade substrate proteins; dbSNP:rs797045221." evidence="22 35">
    <original>P</original>
    <variation>T</variation>
    <location>
        <position position="688"/>
    </location>
</feature>
<feature type="sequence variant" id="VAR_075198" description="In SCA28; dbSNP:rs1598820860." evidence="15">
    <original>Y</original>
    <variation>H</variation>
    <location>
        <position position="689"/>
    </location>
</feature>
<feature type="sequence variant" id="VAR_075199" description="In SCA28; dbSNP:rs1598820860." evidence="21">
    <original>Y</original>
    <variation>N</variation>
    <location>
        <position position="689"/>
    </location>
</feature>
<feature type="sequence variant" id="VAR_063545" description="In SCA28; impaired function shown in a yeast complementation assay; dbSNP:rs151344520." evidence="8 32">
    <original>E</original>
    <variation>K</variation>
    <location>
        <position position="691"/>
    </location>
</feature>
<feature type="sequence variant" id="VAR_063546" description="In SCA28; dbSNP:rs151344521." evidence="8">
    <original>A</original>
    <variation>E</variation>
    <location>
        <position position="694"/>
    </location>
</feature>
<feature type="sequence variant" id="VAR_064408" description="In SCA28; dbSNP:rs151344522." evidence="9">
    <original>E</original>
    <variation>K</variation>
    <location>
        <position position="700"/>
    </location>
</feature>
<feature type="sequence variant" id="VAR_063547" description="In SCA28; dbSNP:rs151344523." evidence="8">
    <original>R</original>
    <variation>Q</variation>
    <location>
        <position position="702"/>
    </location>
</feature>
<feature type="sequence variant" id="VAR_089090" description="In SCA28; dbSNP:rs139469785." evidence="34">
    <original>V</original>
    <variation>M</variation>
    <location>
        <position position="723"/>
    </location>
</feature>
<feature type="mutagenesis site" description="Reduced rate of protein degradation." evidence="35">
    <original>F</original>
    <variation>A</variation>
    <location>
        <position position="289"/>
    </location>
</feature>
<feature type="mutagenesis site" description="Reduced rate of protein degradation." evidence="35">
    <original>L</original>
    <variation>A</variation>
    <location>
        <position position="299"/>
    </location>
</feature>
<feature type="mutagenesis site" description="Does not effect activity of the m-AAA protease complex." evidence="7">
    <original>K</original>
    <variation>A</variation>
    <location>
        <position position="354"/>
    </location>
</feature>
<feature type="mutagenesis site" description="Abolished ATPase and protease activities." evidence="35">
    <original>M</original>
    <variation>K</variation>
    <location>
        <position position="380"/>
    </location>
</feature>
<feature type="mutagenesis site" description="Increased ATP hydrolysis." evidence="35">
    <original>M</original>
    <variation>V</variation>
    <location>
        <position position="380"/>
    </location>
</feature>
<feature type="mutagenesis site" description="Abolished ATPase activity, leading to impaired activity of the m-AAA protease complex, preventing cleavage and degradation of substrate proteins." evidence="7 31 41">
    <original>E</original>
    <variation>Q</variation>
    <location>
        <position position="408"/>
    </location>
</feature>
<feature type="mutagenesis site" description="Impairted protease activity without affecting the ATPase activity." evidence="35">
    <original>F</original>
    <variation>A</variation>
    <location>
        <position position="421"/>
    </location>
</feature>
<feature type="mutagenesis site" description="Abolished protease activity. Loss of autocatalytic processing. Impaired proteolytic maturation of SPG7." evidence="31 32 35">
    <original>E</original>
    <variation>Q</variation>
    <location>
        <position position="575"/>
    </location>
</feature>
<feature type="mutagenesis site" description="Impaired ability to degrade substrates without affecting the ATPase activity." evidence="35">
    <original>W</original>
    <variation>R</variation>
    <location>
        <position position="779"/>
    </location>
</feature>
<feature type="sequence conflict" description="In Ref. 1; CAB48398." evidence="44" ref="1">
    <original>E</original>
    <variation>G</variation>
    <location>
        <position position="74"/>
    </location>
</feature>
<feature type="sequence conflict" description="In Ref. 1; CAB48398." evidence="44" ref="1">
    <original>V</original>
    <variation>A</variation>
    <location>
        <position position="633"/>
    </location>
</feature>
<feature type="strand" evidence="51">
    <location>
        <begin position="165"/>
        <end position="169"/>
    </location>
</feature>
<feature type="helix" evidence="51">
    <location>
        <begin position="172"/>
        <end position="178"/>
    </location>
</feature>
<feature type="helix" evidence="51">
    <location>
        <begin position="180"/>
        <end position="182"/>
    </location>
</feature>
<feature type="strand" evidence="51">
    <location>
        <begin position="185"/>
        <end position="191"/>
    </location>
</feature>
<feature type="turn" evidence="51">
    <location>
        <begin position="192"/>
        <end position="194"/>
    </location>
</feature>
<feature type="strand" evidence="51">
    <location>
        <begin position="195"/>
        <end position="200"/>
    </location>
</feature>
<feature type="turn" evidence="51">
    <location>
        <begin position="202"/>
        <end position="204"/>
    </location>
</feature>
<feature type="strand" evidence="51">
    <location>
        <begin position="212"/>
        <end position="215"/>
    </location>
</feature>
<feature type="helix" evidence="51">
    <location>
        <begin position="219"/>
        <end position="232"/>
    </location>
</feature>
<feature type="turn" evidence="51">
    <location>
        <begin position="237"/>
        <end position="239"/>
    </location>
</feature>
<feature type="strand" evidence="51">
    <location>
        <begin position="243"/>
        <end position="245"/>
    </location>
</feature>
<feature type="strand" evidence="52">
    <location>
        <begin position="297"/>
        <end position="299"/>
    </location>
</feature>
<feature type="helix" evidence="52">
    <location>
        <begin position="307"/>
        <end position="309"/>
    </location>
</feature>
<feature type="turn" evidence="52">
    <location>
        <begin position="315"/>
        <end position="317"/>
    </location>
</feature>
<feature type="helix" evidence="52">
    <location>
        <begin position="318"/>
        <end position="328"/>
    </location>
</feature>
<feature type="turn" evidence="52">
    <location>
        <begin position="332"/>
        <end position="337"/>
    </location>
</feature>
<feature type="strand" evidence="52">
    <location>
        <begin position="344"/>
        <end position="347"/>
    </location>
</feature>
<feature type="helix" evidence="52">
    <location>
        <begin position="356"/>
        <end position="364"/>
    </location>
</feature>
<feature type="strand" evidence="52">
    <location>
        <begin position="369"/>
        <end position="373"/>
    </location>
</feature>
<feature type="helix" evidence="52">
    <location>
        <begin position="374"/>
        <end position="376"/>
    </location>
</feature>
<feature type="helix" evidence="52">
    <location>
        <begin position="385"/>
        <end position="398"/>
    </location>
</feature>
<feature type="strand" evidence="52">
    <location>
        <begin position="403"/>
        <end position="408"/>
    </location>
</feature>
<feature type="helix" evidence="52">
    <location>
        <begin position="409"/>
        <end position="411"/>
    </location>
</feature>
<feature type="helix" evidence="52">
    <location>
        <begin position="422"/>
        <end position="439"/>
    </location>
</feature>
<feature type="turn" evidence="52">
    <location>
        <begin position="440"/>
        <end position="442"/>
    </location>
</feature>
<feature type="strand" evidence="52">
    <location>
        <begin position="443"/>
        <end position="445"/>
    </location>
</feature>
<feature type="strand" evidence="52">
    <location>
        <begin position="450"/>
        <end position="452"/>
    </location>
</feature>
<feature type="strand" evidence="52">
    <location>
        <begin position="457"/>
        <end position="459"/>
    </location>
</feature>
<feature type="turn" evidence="52">
    <location>
        <begin position="461"/>
        <end position="464"/>
    </location>
</feature>
<feature type="helix" evidence="52">
    <location>
        <begin position="480"/>
        <end position="490"/>
    </location>
</feature>
<feature type="helix" evidence="52">
    <location>
        <begin position="504"/>
        <end position="512"/>
    </location>
</feature>
<feature type="helix" evidence="52">
    <location>
        <begin position="518"/>
        <end position="525"/>
    </location>
</feature>
<feature type="helix" evidence="52">
    <location>
        <begin position="527"/>
        <end position="532"/>
    </location>
</feature>
<feature type="turn" evidence="52">
    <location>
        <begin position="533"/>
        <end position="536"/>
    </location>
</feature>
<feature type="helix" evidence="52">
    <location>
        <begin position="543"/>
        <end position="552"/>
    </location>
</feature>
<feature type="helix" evidence="52">
    <location>
        <begin position="565"/>
        <end position="584"/>
    </location>
</feature>
<feature type="strand" evidence="52">
    <location>
        <begin position="585"/>
        <end position="588"/>
    </location>
</feature>
<feature type="strand" evidence="52">
    <location>
        <begin position="591"/>
        <end position="595"/>
    </location>
</feature>
<feature type="strand" evidence="52">
    <location>
        <begin position="605"/>
        <end position="608"/>
    </location>
</feature>
<feature type="helix" evidence="52">
    <location>
        <begin position="618"/>
        <end position="628"/>
    </location>
</feature>
<feature type="helix" evidence="52">
    <location>
        <begin position="630"/>
        <end position="637"/>
    </location>
</feature>
<feature type="helix" evidence="52">
    <location>
        <begin position="647"/>
        <end position="661"/>
    </location>
</feature>
<feature type="strand" evidence="52">
    <location>
        <begin position="668"/>
        <end position="670"/>
    </location>
</feature>
<feature type="strand" evidence="52">
    <location>
        <begin position="679"/>
        <end position="681"/>
    </location>
</feature>
<feature type="helix" evidence="52">
    <location>
        <begin position="691"/>
        <end position="718"/>
    </location>
</feature>
<feature type="helix" evidence="52">
    <location>
        <begin position="720"/>
        <end position="733"/>
    </location>
</feature>
<feature type="helix" evidence="52">
    <location>
        <begin position="738"/>
        <end position="745"/>
    </location>
</feature>
<feature type="helix" evidence="52">
    <location>
        <begin position="756"/>
        <end position="759"/>
    </location>
</feature>
<feature type="turn" evidence="52">
    <location>
        <begin position="761"/>
        <end position="763"/>
    </location>
</feature>
<protein>
    <recommendedName>
        <fullName evidence="44">Mitochondrial inner membrane m-AAA protease component AFG3L2</fullName>
        <ecNumber evidence="4 7 12 31 35 41 42">3.4.24.-</ecNumber>
        <ecNumber evidence="7 35">3.6.-.-</ecNumber>
    </recommendedName>
    <alternativeName>
        <fullName evidence="44">AFG3-like protein 2</fullName>
    </alternativeName>
    <alternativeName>
        <fullName>Paraplegin-like protein</fullName>
    </alternativeName>
</protein>
<reference key="1">
    <citation type="journal article" date="1999" name="Genomics">
        <title>Identification and characterization of AFG3L2, a novel paraplegin-related gene.</title>
        <authorList>
            <person name="Banfi S."/>
            <person name="Bassi M.T."/>
            <person name="Andolfi G."/>
            <person name="Marchitiello A."/>
            <person name="Zanotta S."/>
            <person name="Ballabio A."/>
            <person name="Casari G."/>
            <person name="Franco B."/>
        </authorList>
    </citation>
    <scope>NUCLEOTIDE SEQUENCE [MRNA]</scope>
    <scope>SUBCELLULAR LOCATION</scope>
</reference>
<reference key="2">
    <citation type="journal article" date="2004" name="Genome Res.">
        <title>The status, quality, and expansion of the NIH full-length cDNA project: the Mammalian Gene Collection (MGC).</title>
        <authorList>
            <consortium name="The MGC Project Team"/>
        </authorList>
    </citation>
    <scope>NUCLEOTIDE SEQUENCE [LARGE SCALE MRNA]</scope>
    <source>
        <tissue>Eye</tissue>
    </source>
</reference>
<reference key="3">
    <citation type="journal article" date="2003" name="J. Cell Biol.">
        <title>Loss of m-AAA protease in mitochondria causes complex I deficiency and increased sensitivity to oxidative stress in hereditary spastic paraplegia.</title>
        <authorList>
            <person name="Atorino L."/>
            <person name="Silvestri L."/>
            <person name="Koppen M."/>
            <person name="Cassina L."/>
            <person name="Ballabio A."/>
            <person name="Marconi R."/>
            <person name="Langer T."/>
            <person name="Casari G."/>
        </authorList>
    </citation>
    <scope>INTERACTION WITH SPG7</scope>
</reference>
<reference key="4">
    <citation type="journal article" date="2007" name="Mol. Biol. Cell">
        <title>OPA1 processing reconstituted in yeast depends on the subunit composition of the m-AAA protease in mitochondria.</title>
        <authorList>
            <person name="Duvezin-Caubet S."/>
            <person name="Koppen M."/>
            <person name="Wagener J."/>
            <person name="Zick M."/>
            <person name="Israel L."/>
            <person name="Bernacchia A."/>
            <person name="Jagasia R."/>
            <person name="Rugarli E.I."/>
            <person name="Imhof A."/>
            <person name="Neupert W."/>
            <person name="Langer T."/>
            <person name="Reichert A.S."/>
        </authorList>
    </citation>
    <scope>FUNCTION</scope>
</reference>
<reference key="5">
    <citation type="journal article" date="2007" name="Mol. Cell. Biol.">
        <title>Variable and tissue-specific subunit composition of mitochondrial m-AAA protease complexes linked to hereditary spastic paraplegia.</title>
        <authorList>
            <person name="Koppen M."/>
            <person name="Metodiev M.D."/>
            <person name="Casari G."/>
            <person name="Rugarli E.I."/>
            <person name="Langer T."/>
        </authorList>
    </citation>
    <scope>SUBUNIT</scope>
</reference>
<reference key="6">
    <citation type="journal article" date="2009" name="Mol. Cell">
        <title>An intersubunit signaling network coordinates ATP hydrolysis by m-AAA proteases.</title>
        <authorList>
            <person name="Augustin S."/>
            <person name="Gerdes F."/>
            <person name="Lee S."/>
            <person name="Tsai F.T."/>
            <person name="Langer T."/>
            <person name="Tatsuta T."/>
        </authorList>
    </citation>
    <scope>FUNCTION</scope>
    <scope>CATALYTIC ACTIVITY</scope>
    <scope>MUTAGENESIS OF LYS-354 AND GLU-408</scope>
</reference>
<reference key="7">
    <citation type="journal article" date="2011" name="BMC Syst. Biol.">
        <title>Initial characterization of the human central proteome.</title>
        <authorList>
            <person name="Burkard T.R."/>
            <person name="Planyavsky M."/>
            <person name="Kaupe I."/>
            <person name="Breitwieser F.P."/>
            <person name="Buerckstuemmer T."/>
            <person name="Bennett K.L."/>
            <person name="Superti-Furga G."/>
            <person name="Colinge J."/>
        </authorList>
    </citation>
    <scope>IDENTIFICATION BY MASS SPECTROMETRY [LARGE SCALE ANALYSIS]</scope>
</reference>
<reference key="8">
    <citation type="journal article" date="2012" name="EMBO Rep.">
        <title>Mitochondrial processing peptidase regulates PINK1 processing, import and Parkin recruitment.</title>
        <authorList>
            <person name="Greene A.W."/>
            <person name="Grenier K."/>
            <person name="Aguileta M.A."/>
            <person name="Muise S."/>
            <person name="Farazifard R."/>
            <person name="Haque M.E."/>
            <person name="McBride H.M."/>
            <person name="Park D.S."/>
            <person name="Fon E.A."/>
        </authorList>
    </citation>
    <scope>FUNCTION</scope>
    <scope>CATALYTIC ACTIVITY</scope>
    <scope>SUBCELLULAR LOCATION</scope>
</reference>
<reference key="9">
    <citation type="journal article" date="2014" name="Cerebellum">
        <title>A novel frameshift mutation in the AFG3L2 gene in a patient with spinocerebellar ataxia.</title>
        <authorList>
            <person name="Musova Z."/>
            <person name="Kaiserova M."/>
            <person name="Kriegova E."/>
            <person name="Fillerova R."/>
            <person name="Vasovcak P."/>
            <person name="Santava A."/>
            <person name="Mensikova K."/>
            <person name="Zumrova A."/>
            <person name="Krepelova A."/>
            <person name="Sedlacek Z."/>
            <person name="Kanovsky P."/>
        </authorList>
    </citation>
    <scope>INVOLVEMENT IN SCA28</scope>
</reference>
<reference key="10">
    <citation type="journal article" date="2014" name="Neurology">
        <title>Partial deletion of AFG3L2 causing spinocerebellar ataxia type 28.</title>
        <authorList>
            <person name="Smets K."/>
            <person name="Deconinck T."/>
            <person name="Baets J."/>
            <person name="Sieben A."/>
            <person name="Martin J.J."/>
            <person name="Smouts I."/>
            <person name="Wang S."/>
            <person name="Taroni F."/>
            <person name="Di Bella D."/>
            <person name="Van Hecke W."/>
            <person name="Parizel P.M."/>
            <person name="Jadoul C."/>
            <person name="De Potter R."/>
            <person name="Couvreur F."/>
            <person name="Rugarli E."/>
            <person name="De Jonghe P."/>
        </authorList>
    </citation>
    <scope>INVOLVEMENT IN SCA28</scope>
</reference>
<reference key="11">
    <citation type="journal article" date="2014" name="J. Proteomics">
        <title>An enzyme assisted RP-RPLC approach for in-depth analysis of human liver phosphoproteome.</title>
        <authorList>
            <person name="Bian Y."/>
            <person name="Song C."/>
            <person name="Cheng K."/>
            <person name="Dong M."/>
            <person name="Wang F."/>
            <person name="Huang J."/>
            <person name="Sun D."/>
            <person name="Wang L."/>
            <person name="Ye M."/>
            <person name="Zou H."/>
        </authorList>
    </citation>
    <scope>IDENTIFICATION BY MASS SPECTROMETRY [LARGE SCALE ANALYSIS]</scope>
    <source>
        <tissue>Liver</tissue>
    </source>
</reference>
<reference key="12">
    <citation type="journal article" date="2015" name="J. Cell Biol.">
        <title>Quality control of mitochondrial protein synthesis is required for membrane integrity and cell fitness.</title>
        <authorList>
            <person name="Richter U."/>
            <person name="Lahtinen T."/>
            <person name="Marttinen P."/>
            <person name="Suomi F."/>
            <person name="Battersby B.J."/>
        </authorList>
    </citation>
    <scope>FUNCTION</scope>
</reference>
<reference key="13">
    <citation type="journal article" date="2015" name="Mol. Cell">
        <title>SPG7 is an essential and conserved component of the mitochondrial permeability transition pore.</title>
        <authorList>
            <person name="Shanmughapriya S."/>
            <person name="Rajan S."/>
            <person name="Hoffman N.E."/>
            <person name="Higgins A.M."/>
            <person name="Tomar D."/>
            <person name="Nemani N."/>
            <person name="Hines K.J."/>
            <person name="Smith D.J."/>
            <person name="Eguchi A."/>
            <person name="Vallem S."/>
            <person name="Shaikh F."/>
            <person name="Cheung M."/>
            <person name="Leonard N.J."/>
            <person name="Stolakis R.S."/>
            <person name="Wolfers M.P."/>
            <person name="Ibetti J."/>
            <person name="Chuprun J.K."/>
            <person name="Jog N.R."/>
            <person name="Houser S.R."/>
            <person name="Koch W.J."/>
            <person name="Elrod J.W."/>
            <person name="Madesh M."/>
        </authorList>
    </citation>
    <scope>INTERACTION WITH SPG7</scope>
</reference>
<reference key="14">
    <citation type="journal article" date="2015" name="Proteomics">
        <title>N-terminome analysis of the human mitochondrial proteome.</title>
        <authorList>
            <person name="Vaca Jacome A.S."/>
            <person name="Rabilloud T."/>
            <person name="Schaeffer-Reiss C."/>
            <person name="Rompais M."/>
            <person name="Ayoub D."/>
            <person name="Lane L."/>
            <person name="Bairoch A."/>
            <person name="Van Dorsselaer A."/>
            <person name="Carapito C."/>
        </authorList>
    </citation>
    <scope>IDENTIFICATION BY MASS SPECTROMETRY [LARGE SCALE ANALYSIS]</scope>
</reference>
<reference key="15">
    <citation type="journal article" date="2016" name="Mol. Cell">
        <title>Mitochondrial protein interaction mapping identifies regulators of respiratory chain function.</title>
        <authorList>
            <person name="Floyd B.J."/>
            <person name="Wilkerson E.M."/>
            <person name="Veling M.T."/>
            <person name="Minogue C.E."/>
            <person name="Xia C."/>
            <person name="Beebe E.T."/>
            <person name="Wrobel R.L."/>
            <person name="Cho H."/>
            <person name="Kremer L.S."/>
            <person name="Alston C.L."/>
            <person name="Gromek K.A."/>
            <person name="Dolan B.K."/>
            <person name="Ulbrich A."/>
            <person name="Stefely J.A."/>
            <person name="Bohl S.L."/>
            <person name="Werner K.M."/>
            <person name="Jochem A."/>
            <person name="Westphall M.S."/>
            <person name="Rensvold J.W."/>
            <person name="Taylor R.W."/>
            <person name="Prokisch H."/>
            <person name="Kim J.J."/>
            <person name="Coon J.J."/>
            <person name="Pagliarini D.J."/>
        </authorList>
    </citation>
    <scope>INTERACTION WITH MAIP1</scope>
</reference>
<reference key="16">
    <citation type="journal article" date="2016" name="Mol. Cell">
        <title>The m-AAA protease associated with neurodegeneration limits MCU activity in mitochondria.</title>
        <authorList>
            <person name="Koenig T."/>
            <person name="Troeder S.E."/>
            <person name="Bakka K."/>
            <person name="Korwitz A."/>
            <person name="Richter-Dennerlein R."/>
            <person name="Lampe P.A."/>
            <person name="Patron M."/>
            <person name="Muehlmeister M."/>
            <person name="Guerrero-Castillo S."/>
            <person name="Brandt U."/>
            <person name="Decker T."/>
            <person name="Lauria I."/>
            <person name="Paggio A."/>
            <person name="Rizzuto R."/>
            <person name="Rugarli E.I."/>
            <person name="De Stefani D."/>
            <person name="Langer T."/>
        </authorList>
    </citation>
    <scope>FUNCTION</scope>
    <scope>INTERACTION WITH MAIP1</scope>
</reference>
<reference key="17">
    <citation type="journal article" date="2017" name="Proc. Natl. Acad. Sci. U.S.A.">
        <title>Proteolytic control of the mitochondrial calcium uniporter complex.</title>
        <authorList>
            <person name="Tsai C.W."/>
            <person name="Wu Y."/>
            <person name="Pao P.C."/>
            <person name="Phillips C.B."/>
            <person name="Williams C."/>
            <person name="Miller C."/>
            <person name="Ranaghan M."/>
            <person name="Tsai M.F."/>
        </authorList>
    </citation>
    <scope>FUNCTION</scope>
    <scope>IDENTIFICATION IN THE M-AAA PROTEASE COMPLEX</scope>
</reference>
<reference key="18">
    <citation type="journal article" date="2018" name="Biochemistry">
        <title>Dissecting substrate specificities of the mitochondrial AFG3L2 protease.</title>
        <authorList>
            <person name="Ding B."/>
            <person name="Martin D.W."/>
            <person name="Rampello A.J."/>
            <person name="Glynn S.E."/>
        </authorList>
    </citation>
    <scope>FUNCTION</scope>
    <scope>SUBUNIT</scope>
    <scope>MUTAGENESIS OF GLU-408 AND GLU-575</scope>
</reference>
<reference key="19">
    <citation type="journal article" date="2018" name="J. Cell Sci.">
        <title>m-AAA and i-AAA complexes coordinate to regulate OMA1, the stress-activated supervisor of mitochondrial dynamics.</title>
        <authorList>
            <person name="Consolato F."/>
            <person name="Maltecca F."/>
            <person name="Tulli S."/>
            <person name="Sambri I."/>
            <person name="Casari G."/>
        </authorList>
    </citation>
    <scope>FUNCTION</scope>
</reference>
<reference key="20">
    <citation type="journal article" date="2019" name="Life. Sci Alliance">
        <title>Mitochondrial stress response triggered by defects in protein synthesis quality control.</title>
        <authorList>
            <person name="Richter U."/>
            <person name="Ng K.Y."/>
            <person name="Suomi F."/>
            <person name="Marttinen P."/>
            <person name="Turunen T."/>
            <person name="Jackson C."/>
            <person name="Suomalainen A."/>
            <person name="Vihinen H."/>
            <person name="Jokitalo E."/>
            <person name="Nyman T.A."/>
            <person name="Isokallio M.A."/>
            <person name="Stewart J.B."/>
            <person name="Mancini C."/>
            <person name="Brusco A."/>
            <person name="Seneca S."/>
            <person name="Lombes A."/>
            <person name="Taylor R.W."/>
            <person name="Battersby B.J."/>
        </authorList>
    </citation>
    <scope>FUNCTION</scope>
</reference>
<reference key="21">
    <citation type="journal article" date="2022" name="EMBO J.">
        <title>Regulation of mitochondrial proteostasis by the proton gradient.</title>
        <authorList>
            <person name="Patron M."/>
            <person name="Tarasenko D."/>
            <person name="Nolte H."/>
            <person name="Kroczek L."/>
            <person name="Ghosh M."/>
            <person name="Ohba Y."/>
            <person name="Lasarzewski Y."/>
            <person name="Ahmadi Z.A."/>
            <person name="Cabrera-Orefice A."/>
            <person name="Eyiama A."/>
            <person name="Kellermann T."/>
            <person name="Rugarli E.I."/>
            <person name="Brandt U."/>
            <person name="Meinecke M."/>
            <person name="Langer T."/>
        </authorList>
    </citation>
    <scope>FUNCTION</scope>
</reference>
<reference key="22">
    <citation type="journal article" date="2022" name="Hum. Mol. Genet.">
        <title>Translation of MT-ATP6 pathogenic variants reveals distinct regulatory consequences from the co-translational quality control of mitochondrial protein synthesis.</title>
        <authorList>
            <person name="Ng K.Y."/>
            <person name="Richter U."/>
            <person name="Jackson C.B."/>
            <person name="Seneca S."/>
            <person name="Battersby B.J."/>
        </authorList>
    </citation>
    <scope>FUNCTION</scope>
</reference>
<reference key="23">
    <citation type="journal article" date="2023" name="Mol. Cell">
        <title>Dual regulation of SLC25A39 by AFG3L2 and iron controls mitochondrial glutathione homeostasis.</title>
        <authorList>
            <person name="Shi X."/>
            <person name="DeCiucis M."/>
            <person name="Grabinska K.A."/>
            <person name="Kanyo J."/>
            <person name="Liu A."/>
            <person name="Lam T.T."/>
            <person name="Shen H."/>
        </authorList>
    </citation>
    <scope>FUNCTION</scope>
</reference>
<reference key="24">
    <citation type="journal article" date="2023" name="Science">
        <title>Autoregulatory control of mitochondrial glutathione homeostasis.</title>
        <authorList>
            <person name="Liu Y."/>
            <person name="Liu S."/>
            <person name="Tomar A."/>
            <person name="Yen F.S."/>
            <person name="Unlu G."/>
            <person name="Ropek N."/>
            <person name="Weber R.A."/>
            <person name="Wang Y."/>
            <person name="Khan A."/>
            <person name="Gad M."/>
            <person name="Peng J."/>
            <person name="Terzi E."/>
            <person name="Alwaseem H."/>
            <person name="Pagano A.E."/>
            <person name="Heissel S."/>
            <person name="Molina H."/>
            <person name="Allwein B."/>
            <person name="Kenny T.C."/>
            <person name="Possemato R.L."/>
            <person name="Zhao L."/>
            <person name="Hite R.K."/>
            <person name="Vinogradova E.V."/>
            <person name="Mansy S.S."/>
            <person name="Birsoy K."/>
        </authorList>
    </citation>
    <scope>FUNCTION</scope>
    <scope>MUTAGENESIS OF GLU-408</scope>
</reference>
<reference evidence="49" key="25">
    <citation type="journal article" date="2013" name="FEBS Lett.">
        <title>NMR structure and MD simulations of the AAA protease intermembrane space domain indicates peripheral membrane localization within the hexaoligomer.</title>
        <authorList>
            <person name="Ramelot T.A."/>
            <person name="Yang Y."/>
            <person name="Sahu I.D."/>
            <person name="Lee H.W."/>
            <person name="Xiao R."/>
            <person name="Lorigan G.A."/>
            <person name="Montelione G.T."/>
            <person name="Kennedy M.A."/>
        </authorList>
    </citation>
    <scope>STRUCTURE BY NMR OF 164-251</scope>
    <scope>SUBUNIT</scope>
</reference>
<reference evidence="50" key="26">
    <citation type="journal article" date="2019" name="Mol. Cell">
        <title>Unique structural features of the mitochondrial AAA+ protease AFG3L2 reveal the molecular basis for activity in health and disease.</title>
        <authorList>
            <person name="Puchades C."/>
            <person name="Ding B."/>
            <person name="Song A."/>
            <person name="Wiseman R.L."/>
            <person name="Lander G.C."/>
            <person name="Glynn S.E."/>
        </authorList>
    </citation>
    <scope>STRUCTURE BY ELECTRON MICROSCOPY (3.00 ANGSTROMS) OF 272-797 IN COMPLEX WITH ZINC; ADP AND PEPTIDE SUBSTRATE</scope>
    <scope>FUNCTION</scope>
    <scope>CATALYTIC ACTIVITY</scope>
    <scope>COFACTOR</scope>
    <scope>SUBUNIT</scope>
    <scope>SUBCELLULAR LOCATION</scope>
    <scope>MUTAGENESIS OF PHE-289; LEU-299; MET-380; PHE-421; GLU-575 AND TRP-779</scope>
    <scope>CHARACTERIZATION OF VARIANTS SCA28 THR-432; CYS-616; ARG-666 AND THR-688</scope>
    <scope>CHARACTERIZATION OF VARIANT THR-572</scope>
</reference>
<reference key="27">
    <citation type="journal article" date="2010" name="Eur. J. Hum. Genet.">
        <title>Early onset and slow progression of SCA28, a rare dominant ataxia in a large four-generation family with a novel AFG3L2 mutation.</title>
        <authorList>
            <person name="Edener U."/>
            <person name="Wollner J."/>
            <person name="Hehr U."/>
            <person name="Kohl Z."/>
            <person name="Schilling S."/>
            <person name="Kreuz F."/>
            <person name="Bauer P."/>
            <person name="Bernard V."/>
            <person name="Gillessen-Kaesbach G."/>
            <person name="Zuhlke C."/>
        </authorList>
    </citation>
    <scope>VARIANT SCA28 LYS-700</scope>
</reference>
<reference key="28">
    <citation type="journal article" date="2010" name="Hum. Mutat.">
        <title>Missense mutations in the AFG3L2 proteolytic domain account for approximately 1.5% of European autosomal dominant cerebellar ataxias.</title>
        <authorList>
            <person name="Cagnoli C."/>
            <person name="Stevanin G."/>
            <person name="Brussino A."/>
            <person name="Barberis M."/>
            <person name="Mancini C."/>
            <person name="Margolis R.L."/>
            <person name="Holmes S.E."/>
            <person name="Nobili M."/>
            <person name="Forlani S."/>
            <person name="Padovan S."/>
            <person name="Pappi P."/>
            <person name="Zaros C."/>
            <person name="Leber I."/>
            <person name="Ribai P."/>
            <person name="Pugliese L."/>
            <person name="Assalto C."/>
            <person name="Brice A."/>
            <person name="Migone N."/>
            <person name="Durr A."/>
            <person name="Brusco A."/>
        </authorList>
    </citation>
    <scope>VARIANTS SCA28 ILE-654; VAL-666; ARG-666; THR-666; ARG-671 AND GLU-671</scope>
</reference>
<reference key="29">
    <citation type="journal article" date="2010" name="Nat. Genet.">
        <title>Mutations in the mitochondrial protease gene AFG3L2 cause dominant hereditary ataxia SCA28.</title>
        <authorList>
            <person name="Di Bella D."/>
            <person name="Lazzaro F."/>
            <person name="Brusco A."/>
            <person name="Plumari M."/>
            <person name="Battaglia G."/>
            <person name="Pastore A."/>
            <person name="Finardi A."/>
            <person name="Cagnoli C."/>
            <person name="Tempia F."/>
            <person name="Frontali M."/>
            <person name="Veneziano L."/>
            <person name="Sacco T."/>
            <person name="Boda E."/>
            <person name="Brussino A."/>
            <person name="Bonn F."/>
            <person name="Castellotti B."/>
            <person name="Baratta S."/>
            <person name="Mariotti C."/>
            <person name="Gellera C."/>
            <person name="Fracasso V."/>
            <person name="Magri S."/>
            <person name="Langer T."/>
            <person name="Plevani P."/>
            <person name="Di Donato S."/>
            <person name="Muzi-Falconi M."/>
            <person name="Taroni F."/>
        </authorList>
    </citation>
    <scope>VARIANTS SCA28 THR-432; LYS-691; GLU-694 AND GLN-702</scope>
    <scope>TISSUE SPECIFICITY</scope>
</reference>
<reference key="30">
    <citation type="journal article" date="2011" name="PLoS Genet.">
        <title>Whole-exome sequencing identifies homozygous AFG3L2 mutations in a spastic ataxia-neuropathy syndrome linked to mitochondrial m-AAA proteases.</title>
        <authorList>
            <person name="Pierson T.M."/>
            <person name="Adams D."/>
            <person name="Bonn F."/>
            <person name="Martinelli P."/>
            <person name="Cherukuri P.F."/>
            <person name="Teer J.K."/>
            <person name="Hansen N.F."/>
            <person name="Cruz P."/>
            <person name="Mullikin J.C."/>
            <person name="Blakesley R.W."/>
            <person name="Golas G."/>
            <person name="Kwan J."/>
            <person name="Sandler A."/>
            <person name="Fuentes Fajardo K."/>
            <person name="Markello T."/>
            <person name="Tifft C."/>
            <person name="Blackstone C."/>
            <person name="Rugarli E.I."/>
            <person name="Langer T."/>
            <person name="Gahl W.A."/>
            <person name="Toro C."/>
        </authorList>
    </citation>
    <scope>VARIANT SPAX5 CYS-616</scope>
    <scope>CHARACTERIZATION OF VARIANT SPAX5 CYS-616</scope>
</reference>
<reference key="31">
    <citation type="journal article" date="2014" name="J. Mol. Neurosci.">
        <title>A novel missense mutation in AFG3L2 associated with late onset and slow progression of spinocerebellar ataxia type 28.</title>
        <authorList>
            <person name="Loebbe A.M."/>
            <person name="Kang J.S."/>
            <person name="Hilker R."/>
            <person name="Hackstein H."/>
            <person name="Mueller U."/>
            <person name="Nolte D."/>
        </authorList>
    </citation>
    <scope>VARIANT SCA28 HIS-689</scope>
</reference>
<reference key="32">
    <citation type="journal article" date="2015" name="Cerebellum Ataxias">
        <title>Spinocerebellar ataxia 28: a novel AFG3L2 mutation in a German family with young onset, slow progression and saccadic slowing.</title>
        <authorList>
            <person name="Zuehlke C."/>
            <person name="Mikat B."/>
            <person name="Timmann D."/>
            <person name="Wieczorek D."/>
            <person name="Gillessen-Kaesbach G."/>
            <person name="Buerk K."/>
        </authorList>
    </citation>
    <scope>VARIANT SCA28 ASN-689</scope>
</reference>
<reference key="33">
    <citation type="journal article" date="2015" name="Front. Genet.">
        <title>A novel mutation of AFG3L2 might cause dominant optic atrophy in patients with mild intellectual disability.</title>
        <authorList>
            <person name="Charif M."/>
            <person name="Roubertie A."/>
            <person name="Salime S."/>
            <person name="Mamouni S."/>
            <person name="Goizet C."/>
            <person name="Hamel C.P."/>
            <person name="Lenaers G."/>
        </authorList>
    </citation>
    <scope>VARIANT OPA12 CYS-468</scope>
    <scope>INVOLVEMENT IN OPA12</scope>
</reference>
<reference key="34">
    <citation type="journal article" date="2015" name="J. Neurol. Sci.">
        <title>A novel AFG3L2 mutation in a Somalian patient with spinocerebellar ataxia type 28.</title>
        <authorList>
            <person name="Qu J."/>
            <person name="Wu C.K."/>
            <person name="Zuzuarregui J.R."/>
            <person name="Hohler A.D."/>
        </authorList>
    </citation>
    <scope>VARIANT SCA28 ILE-191</scope>
</reference>
<reference key="35">
    <citation type="journal article" date="2017" name="Biomed. Rep.">
        <title>Non-syndromic isolated dominant optic atrophy caused by the p.R468C mutation in the AFG3 like matrix AAA peptidase subunit 2 gene.</title>
        <authorList>
            <person name="Colavito D."/>
            <person name="Maritan V."/>
            <person name="Suppiej A."/>
            <person name="Del Giudice E."/>
            <person name="Mazzarolo M."/>
            <person name="Miotto S."/>
            <person name="Farina S."/>
            <person name="Dalle Carbonare M."/>
            <person name="Piermarocchi S."/>
            <person name="Leon A."/>
        </authorList>
    </citation>
    <scope>VARIANT OPA12 CYS-468</scope>
    <scope>INVOLVEMENT IN OPA12</scope>
</reference>
<reference key="36">
    <citation type="journal article" date="2017" name="Brain">
        <title>Exome sequencing and network analysis identifies shared mechanisms underlying spinocerebellar ataxia.</title>
        <authorList>
            <person name="Nibbeling E.A.R."/>
            <person name="Duarri A."/>
            <person name="Verschuuren-Bemelmans C.C."/>
            <person name="Fokkens M.R."/>
            <person name="Karjalainen J.M."/>
            <person name="Smeets C.J.L.M."/>
            <person name="de Boer-Bergsma J.J."/>
            <person name="van der Vries G."/>
            <person name="Dooijes D."/>
            <person name="Bampi G.B."/>
            <person name="van Diemen C."/>
            <person name="Brunt E."/>
            <person name="Ippel E."/>
            <person name="Kremer B."/>
            <person name="Vlak M."/>
            <person name="Adir N."/>
            <person name="Wijmenga C."/>
            <person name="van de Warrenburg B.P.C."/>
            <person name="Franke L."/>
            <person name="Sinke R.J."/>
            <person name="Verbeek D.S."/>
        </authorList>
    </citation>
    <scope>VARIANTS SCA28 VAL-621 AND VAL-666</scope>
</reference>
<reference key="37">
    <citation type="journal article" date="2017" name="Cerebellum">
        <title>SCA28: Novel mutation in the AFG3L2 proteolytic domain causes a mild cerebellar syndrome with selective type-1 muscle fiber atrophy.</title>
        <authorList>
            <person name="Svenstrup K."/>
            <person name="Nielsen T.T."/>
            <person name="Aidt F."/>
            <person name="Rostgaard N."/>
            <person name="Duno M."/>
            <person name="Wibrand F."/>
            <person name="Vinther-Jensen T."/>
            <person name="Law I."/>
            <person name="Vissing J."/>
            <person name="Roos P."/>
            <person name="Hjermind L.E."/>
            <person name="Nielsen J.E."/>
        </authorList>
    </citation>
    <scope>VARIANT SCA28 THR-688</scope>
</reference>
<reference key="38">
    <citation type="journal article" date="2017" name="Cerebellum">
        <title>Neurocognitive characterization of an SCA28 family caused by a novel AFG3L2 gene mutation.</title>
        <authorList>
            <person name="Szpisjak L."/>
            <person name="Nemeth V.L."/>
            <person name="Szepfalusi N."/>
            <person name="Zadori D."/>
            <person name="Maroti Z."/>
            <person name="Kalmar T."/>
            <person name="Vecsei L."/>
            <person name="Klivenyi P."/>
        </authorList>
    </citation>
    <scope>VARIANT SCA28 ARG-671</scope>
</reference>
<reference key="39">
    <citation type="journal article" date="2017" name="Pediatr. Neurol.">
        <title>Recessive AFG3L2 Mutation Causes Progressive Microcephaly, Early Onset Seizures, Spasticity, and Basal Ganglia Involvement.</title>
        <authorList>
            <person name="Eskandrani A."/>
            <person name="AlHashem A."/>
            <person name="Ali E.S."/>
            <person name="AlShahwan S."/>
            <person name="Tlili K."/>
            <person name="Hundallah K."/>
            <person name="Tabarki B."/>
        </authorList>
    </citation>
    <scope>VARIANT THR-572</scope>
</reference>
<reference key="40">
    <citation type="journal article" date="2018" name="Hum. Mutat.">
        <title>Concurrent AFG3L2 and SPG7 mutations associated with syndromic parkinsonism and optic atrophy with aberrant OPA1 processing and mitochondrial network fragmentation.</title>
        <authorList>
            <person name="Magri S."/>
            <person name="Fracasso V."/>
            <person name="Plumari M."/>
            <person name="Alfei E."/>
            <person name="Ghezzi D."/>
            <person name="Gellera C."/>
            <person name="Rusmini P."/>
            <person name="Poletti A."/>
            <person name="Di Bella D."/>
            <person name="Elia A.E."/>
            <person name="Pantaleoni C."/>
            <person name="Taroni F."/>
        </authorList>
    </citation>
    <scope>VARIANT OPA12 CYS-468</scope>
    <scope>CHARACTERIZATION OF VARIANT OPA12 CYS-468</scope>
    <scope>CHARACTERIZATION OF VARIANT SCA28 LYS-691</scope>
    <scope>MUTAGENESIS OF GLU-575</scope>
    <scope>FUNCTION</scope>
    <scope>INTERACTION WITH SPG7</scope>
</reference>
<reference key="41">
    <citation type="journal article" date="2019" name="Cerebellum">
        <title>Spinocerebellar ataxia type 28-phenotypic and molecular characterization of a family with heterozygous and compound-heterozygous mutations in AFG3L2.</title>
        <authorList>
            <person name="Tunc S."/>
            <person name="Dulovic-Mahlow M."/>
            <person name="Baumann H."/>
            <person name="Baaske M.K."/>
            <person name="Jahn M."/>
            <person name="Junker J."/>
            <person name="Muenchau A."/>
            <person name="Brueggemann N."/>
            <person name="Lohmann K."/>
        </authorList>
    </citation>
    <scope>VARIANTS SCA28 CYS-616 AND MET-723</scope>
</reference>
<reference key="42">
    <citation type="journal article" date="2020" name="Acta Neuropathol. Commun.">
        <title>A novel AFG3L2 mutation close to AAA domain leads to aberrant OMA1 and OPA1 processing in a family with optic atrophy.</title>
        <authorList>
            <person name="Baderna V."/>
            <person name="Schultz J."/>
            <person name="Kearns L.S."/>
            <person name="Fahey M."/>
            <person name="Thompson B.A."/>
            <person name="Ruddle J.B."/>
            <person name="Huq A."/>
            <person name="Maltecca F."/>
        </authorList>
    </citation>
    <scope>VARIANT OPA12 GLU-337</scope>
    <scope>CHARACTERIZATION OF VARIANT OPA12 GLU-337</scope>
    <scope>FUNCTION</scope>
</reference>
<reference key="43">
    <citation type="journal article" date="2020" name="Ann. Neurol.">
        <title>ATPase domain AFG3L2 mutations alter OPA1 processing and cause optic neuropathy.</title>
        <authorList>
            <person name="Caporali L."/>
            <person name="Magri S."/>
            <person name="Legati A."/>
            <person name="Del Dotto V."/>
            <person name="Tagliavini F."/>
            <person name="Balistreri F."/>
            <person name="Nasca A."/>
            <person name="La Morgia C."/>
            <person name="Carbonelli M."/>
            <person name="Valentino M.L."/>
            <person name="Lamantea E."/>
            <person name="Baratta S."/>
            <person name="Schoels L."/>
            <person name="Schuele R."/>
            <person name="Barboni P."/>
            <person name="Cascavilla M.L."/>
            <person name="Maresca A."/>
            <person name="Capristo M."/>
            <person name="Ardissone A."/>
            <person name="Pareyson D."/>
            <person name="Cammarata G."/>
            <person name="Melzi L."/>
            <person name="Zeviani M."/>
            <person name="Peverelli L."/>
            <person name="Lamperti C."/>
            <person name="Marzoli S.B."/>
            <person name="Fang M."/>
            <person name="Synofzik M."/>
            <person name="Ghezzi D."/>
            <person name="Carelli V."/>
            <person name="Taroni F."/>
        </authorList>
    </citation>
    <scope>INVOLVEMENT IN OPA12</scope>
    <scope>VARIANTS SPAX5 GLU-306; VAL-462 AND LYS-620</scope>
    <scope>VARIANTS OPA12 PHE-346; SER-377; GLY-407; ILE-430; VAL-462; LYS-465; LEU-514 AND CYS-605</scope>
    <scope>CHARACTERIZATION OF VARIANTS OPA12 GLY-407; VAL-462; LYS-465 AND LEU-514</scope>
    <scope>CHARACTERIZATION OF VARIANT SPAX5 LYS-620</scope>
</reference>
<reference key="44">
    <citation type="journal article" date="2020" name="Neurol. Genet.">
        <title>Mutations in the m-AAA proteases AFG3L2 and SPG7 are causing isolated dominant optic atrophy.</title>
        <authorList>
            <person name="Charif M."/>
            <person name="Chevrollier A."/>
            <person name="Gueguen N."/>
            <person name="Bris C."/>
            <person name="Goudenege D."/>
            <person name="Desquiret-Dumas V."/>
            <person name="Leruez S."/>
            <person name="Colin E."/>
            <person name="Meunier A."/>
            <person name="Vignal C."/>
            <person name="Smirnov V."/>
            <person name="Defoort-Dhellemmes S."/>
            <person name="Drumare Bouvet I."/>
            <person name="Goizet C."/>
            <person name="Votruba M."/>
            <person name="Jurkute N."/>
            <person name="Yu-Wai-Man P."/>
            <person name="Tagliavini F."/>
            <person name="Caporali L."/>
            <person name="La Morgia C."/>
            <person name="Carelli V."/>
            <person name="Procaccio V."/>
            <person name="Zanlonghi X."/>
            <person name="Meunier I."/>
            <person name="Reynier P."/>
            <person name="Bonneau D."/>
            <person name="Amati-Bonneau P."/>
            <person name="Lenaers G."/>
        </authorList>
    </citation>
    <scope>VARIANTS OPA12 ALA-74; ARG-337; GLU-337; LYS-376; SER-416; LEU-514 AND SER-644</scope>
</reference>
<gene>
    <name evidence="43 48" type="primary">AFG3L2</name>
</gene>
<name>AFG32_HUMAN</name>
<proteinExistence type="evidence at protein level"/>
<dbReference type="EC" id="3.4.24.-" evidence="4 7 12 31 35 41 42"/>
<dbReference type="EC" id="3.6.-.-" evidence="7 35"/>
<dbReference type="EMBL" id="Y18314">
    <property type="protein sequence ID" value="CAB48398.1"/>
    <property type="molecule type" value="mRNA"/>
</dbReference>
<dbReference type="EMBL" id="BC065016">
    <property type="protein sequence ID" value="AAH65016.1"/>
    <property type="molecule type" value="mRNA"/>
</dbReference>
<dbReference type="CCDS" id="CCDS11859.1"/>
<dbReference type="RefSeq" id="NP_006787.2">
    <property type="nucleotide sequence ID" value="NM_006796.3"/>
</dbReference>
<dbReference type="PDB" id="2LNA">
    <property type="method" value="NMR"/>
    <property type="chains" value="A=164-251"/>
</dbReference>
<dbReference type="PDB" id="6NYY">
    <property type="method" value="EM"/>
    <property type="resolution" value="3.00 A"/>
    <property type="chains" value="A/B/C/D/E/F=272-797"/>
</dbReference>
<dbReference type="PDBsum" id="2LNA"/>
<dbReference type="PDBsum" id="6NYY"/>
<dbReference type="BMRB" id="Q9Y4W6"/>
<dbReference type="EMDB" id="EMD-0552"/>
<dbReference type="SMR" id="Q9Y4W6"/>
<dbReference type="BioGRID" id="116139">
    <property type="interactions" value="379"/>
</dbReference>
<dbReference type="ComplexPortal" id="CPX-10318">
    <property type="entry name" value="m-AAA protease complex, AFG3L2 variant"/>
</dbReference>
<dbReference type="ComplexPortal" id="CPX-10319">
    <property type="entry name" value="m-AAA protease complex, AFG3L2-SPG7 variant"/>
</dbReference>
<dbReference type="CORUM" id="Q9Y4W6"/>
<dbReference type="FunCoup" id="Q9Y4W6">
    <property type="interactions" value="2609"/>
</dbReference>
<dbReference type="IntAct" id="Q9Y4W6">
    <property type="interactions" value="136"/>
</dbReference>
<dbReference type="MINT" id="Q9Y4W6"/>
<dbReference type="STRING" id="9606.ENSP00000269143"/>
<dbReference type="BindingDB" id="Q9Y4W6"/>
<dbReference type="ChEMBL" id="CHEMBL4802020"/>
<dbReference type="DrugBank" id="DB00171">
    <property type="generic name" value="ATP"/>
</dbReference>
<dbReference type="MEROPS" id="M41.007"/>
<dbReference type="GlyGen" id="Q9Y4W6">
    <property type="glycosylation" value="1 site, 1 O-linked glycan (1 site)"/>
</dbReference>
<dbReference type="iPTMnet" id="Q9Y4W6"/>
<dbReference type="MetOSite" id="Q9Y4W6"/>
<dbReference type="PhosphoSitePlus" id="Q9Y4W6"/>
<dbReference type="SwissPalm" id="Q9Y4W6"/>
<dbReference type="BioMuta" id="AFG3L2"/>
<dbReference type="DMDM" id="126302516"/>
<dbReference type="jPOST" id="Q9Y4W6"/>
<dbReference type="MassIVE" id="Q9Y4W6"/>
<dbReference type="PaxDb" id="9606-ENSP00000269143"/>
<dbReference type="PeptideAtlas" id="Q9Y4W6"/>
<dbReference type="ProteomicsDB" id="86254"/>
<dbReference type="Pumba" id="Q9Y4W6"/>
<dbReference type="TopDownProteomics" id="Q9Y4W6"/>
<dbReference type="Antibodypedia" id="1387">
    <property type="antibodies" value="264 antibodies from 31 providers"/>
</dbReference>
<dbReference type="DNASU" id="10939"/>
<dbReference type="Ensembl" id="ENST00000269143.8">
    <property type="protein sequence ID" value="ENSP00000269143.2"/>
    <property type="gene ID" value="ENSG00000141385.12"/>
</dbReference>
<dbReference type="GeneID" id="10939"/>
<dbReference type="KEGG" id="hsa:10939"/>
<dbReference type="MANE-Select" id="ENST00000269143.8">
    <property type="protein sequence ID" value="ENSP00000269143.2"/>
    <property type="RefSeq nucleotide sequence ID" value="NM_006796.3"/>
    <property type="RefSeq protein sequence ID" value="NP_006787.2"/>
</dbReference>
<dbReference type="UCSC" id="uc002kqz.3">
    <property type="organism name" value="human"/>
</dbReference>
<dbReference type="AGR" id="HGNC:315"/>
<dbReference type="CTD" id="10939"/>
<dbReference type="DisGeNET" id="10939"/>
<dbReference type="GeneCards" id="AFG3L2"/>
<dbReference type="GeneReviews" id="AFG3L2"/>
<dbReference type="HGNC" id="HGNC:315">
    <property type="gene designation" value="AFG3L2"/>
</dbReference>
<dbReference type="HPA" id="ENSG00000141385">
    <property type="expression patterns" value="Tissue enhanced (skeletal)"/>
</dbReference>
<dbReference type="MalaCards" id="AFG3L2"/>
<dbReference type="MIM" id="604581">
    <property type="type" value="gene"/>
</dbReference>
<dbReference type="MIM" id="610246">
    <property type="type" value="phenotype"/>
</dbReference>
<dbReference type="MIM" id="614487">
    <property type="type" value="phenotype"/>
</dbReference>
<dbReference type="MIM" id="618977">
    <property type="type" value="phenotype"/>
</dbReference>
<dbReference type="neXtProt" id="NX_Q9Y4W6"/>
<dbReference type="OpenTargets" id="ENSG00000141385"/>
<dbReference type="Orphanet" id="313772">
    <property type="disease" value="Early-onset spastic ataxia-myoclonic epilepsy-neuropathy syndrome"/>
</dbReference>
<dbReference type="Orphanet" id="101109">
    <property type="disease" value="Spinocerebellar ataxia type 28"/>
</dbReference>
<dbReference type="PharmGKB" id="PA24612"/>
<dbReference type="VEuPathDB" id="HostDB:ENSG00000141385"/>
<dbReference type="eggNOG" id="KOG0731">
    <property type="taxonomic scope" value="Eukaryota"/>
</dbReference>
<dbReference type="GeneTree" id="ENSGT00940000159566"/>
<dbReference type="HOGENOM" id="CLU_000688_23_1_1"/>
<dbReference type="InParanoid" id="Q9Y4W6"/>
<dbReference type="OMA" id="ARQKGNF"/>
<dbReference type="OrthoDB" id="1413014at2759"/>
<dbReference type="PAN-GO" id="Q9Y4W6">
    <property type="GO annotations" value="3 GO annotations based on evolutionary models"/>
</dbReference>
<dbReference type="PhylomeDB" id="Q9Y4W6"/>
<dbReference type="TreeFam" id="TF105004"/>
<dbReference type="BRENDA" id="3.4.24.B18">
    <property type="organism ID" value="2681"/>
</dbReference>
<dbReference type="PathwayCommons" id="Q9Y4W6"/>
<dbReference type="Reactome" id="R-HSA-8949664">
    <property type="pathway name" value="Processing of SMDT1"/>
</dbReference>
<dbReference type="Reactome" id="R-HSA-9837999">
    <property type="pathway name" value="Mitochondrial protein degradation"/>
</dbReference>
<dbReference type="SignaLink" id="Q9Y4W6"/>
<dbReference type="BioGRID-ORCS" id="10939">
    <property type="hits" value="754 hits in 1181 CRISPR screens"/>
</dbReference>
<dbReference type="CD-CODE" id="91857CE7">
    <property type="entry name" value="Nucleolus"/>
</dbReference>
<dbReference type="CD-CODE" id="FB4E32DD">
    <property type="entry name" value="Presynaptic clusters and postsynaptic densities"/>
</dbReference>
<dbReference type="ChiTaRS" id="AFG3L2">
    <property type="organism name" value="human"/>
</dbReference>
<dbReference type="EvolutionaryTrace" id="Q9Y4W6"/>
<dbReference type="GeneWiki" id="AFG3L2"/>
<dbReference type="GenomeRNAi" id="10939"/>
<dbReference type="Pharos" id="Q9Y4W6">
    <property type="development level" value="Tbio"/>
</dbReference>
<dbReference type="PRO" id="PR:Q9Y4W6"/>
<dbReference type="Proteomes" id="UP000005640">
    <property type="component" value="Chromosome 18"/>
</dbReference>
<dbReference type="RNAct" id="Q9Y4W6">
    <property type="molecule type" value="protein"/>
</dbReference>
<dbReference type="Bgee" id="ENSG00000141385">
    <property type="expression patterns" value="Expressed in Brodmann (1909) area 23 and 198 other cell types or tissues"/>
</dbReference>
<dbReference type="ExpressionAtlas" id="Q9Y4W6">
    <property type="expression patterns" value="baseline and differential"/>
</dbReference>
<dbReference type="GO" id="GO:0005745">
    <property type="term" value="C:m-AAA complex"/>
    <property type="evidence" value="ECO:0000314"/>
    <property type="project" value="UniProtKB"/>
</dbReference>
<dbReference type="GO" id="GO:0005743">
    <property type="term" value="C:mitochondrial inner membrane"/>
    <property type="evidence" value="ECO:0000314"/>
    <property type="project" value="UniProt"/>
</dbReference>
<dbReference type="GO" id="GO:0005739">
    <property type="term" value="C:mitochondrion"/>
    <property type="evidence" value="ECO:0000314"/>
    <property type="project" value="UniProtKB"/>
</dbReference>
<dbReference type="GO" id="GO:0005524">
    <property type="term" value="F:ATP binding"/>
    <property type="evidence" value="ECO:0007669"/>
    <property type="project" value="UniProtKB-KW"/>
</dbReference>
<dbReference type="GO" id="GO:0016887">
    <property type="term" value="F:ATP hydrolysis activity"/>
    <property type="evidence" value="ECO:0000314"/>
    <property type="project" value="UniProtKB"/>
</dbReference>
<dbReference type="GO" id="GO:0004176">
    <property type="term" value="F:ATP-dependent peptidase activity"/>
    <property type="evidence" value="ECO:0007669"/>
    <property type="project" value="InterPro"/>
</dbReference>
<dbReference type="GO" id="GO:0004222">
    <property type="term" value="F:metalloendopeptidase activity"/>
    <property type="evidence" value="ECO:0000314"/>
    <property type="project" value="UniProtKB"/>
</dbReference>
<dbReference type="GO" id="GO:0008237">
    <property type="term" value="F:metallopeptidase activity"/>
    <property type="evidence" value="ECO:0000315"/>
    <property type="project" value="UniProtKB"/>
</dbReference>
<dbReference type="GO" id="GO:0051082">
    <property type="term" value="F:unfolded protein binding"/>
    <property type="evidence" value="ECO:0000304"/>
    <property type="project" value="ProtInc"/>
</dbReference>
<dbReference type="GO" id="GO:0008270">
    <property type="term" value="F:zinc ion binding"/>
    <property type="evidence" value="ECO:0007669"/>
    <property type="project" value="InterPro"/>
</dbReference>
<dbReference type="GO" id="GO:0007409">
    <property type="term" value="P:axonogenesis"/>
    <property type="evidence" value="ECO:0000315"/>
    <property type="project" value="UniProtKB"/>
</dbReference>
<dbReference type="GO" id="GO:0036444">
    <property type="term" value="P:calcium import into the mitochondrion"/>
    <property type="evidence" value="ECO:0000315"/>
    <property type="project" value="UniProtKB"/>
</dbReference>
<dbReference type="GO" id="GO:0072753">
    <property type="term" value="P:cellular response to glutathione"/>
    <property type="evidence" value="ECO:0000314"/>
    <property type="project" value="UniProtKB"/>
</dbReference>
<dbReference type="GO" id="GO:0042407">
    <property type="term" value="P:cristae formation"/>
    <property type="evidence" value="ECO:0007669"/>
    <property type="project" value="Ensembl"/>
</dbReference>
<dbReference type="GO" id="GO:0033619">
    <property type="term" value="P:membrane protein proteolysis"/>
    <property type="evidence" value="ECO:0000314"/>
    <property type="project" value="UniProtKB"/>
</dbReference>
<dbReference type="GO" id="GO:0051560">
    <property type="term" value="P:mitochondrial calcium ion homeostasis"/>
    <property type="evidence" value="ECO:0000315"/>
    <property type="project" value="UniProtKB"/>
</dbReference>
<dbReference type="GO" id="GO:0008053">
    <property type="term" value="P:mitochondrial fusion"/>
    <property type="evidence" value="ECO:0007669"/>
    <property type="project" value="Ensembl"/>
</dbReference>
<dbReference type="GO" id="GO:0034982">
    <property type="term" value="P:mitochondrial protein processing"/>
    <property type="evidence" value="ECO:0000318"/>
    <property type="project" value="GO_Central"/>
</dbReference>
<dbReference type="GO" id="GO:0141164">
    <property type="term" value="P:mitochondrial protein quality control"/>
    <property type="evidence" value="ECO:0000314"/>
    <property type="project" value="UniProtKB"/>
</dbReference>
<dbReference type="GO" id="GO:0055001">
    <property type="term" value="P:muscle cell development"/>
    <property type="evidence" value="ECO:0007669"/>
    <property type="project" value="Ensembl"/>
</dbReference>
<dbReference type="GO" id="GO:0042552">
    <property type="term" value="P:myelination"/>
    <property type="evidence" value="ECO:0007669"/>
    <property type="project" value="Ensembl"/>
</dbReference>
<dbReference type="GO" id="GO:0021675">
    <property type="term" value="P:nerve development"/>
    <property type="evidence" value="ECO:0007669"/>
    <property type="project" value="Ensembl"/>
</dbReference>
<dbReference type="GO" id="GO:0007528">
    <property type="term" value="P:neuromuscular junction development"/>
    <property type="evidence" value="ECO:0007669"/>
    <property type="project" value="Ensembl"/>
</dbReference>
<dbReference type="GO" id="GO:0016540">
    <property type="term" value="P:protein autoprocessing"/>
    <property type="evidence" value="ECO:0000250"/>
    <property type="project" value="UniProtKB"/>
</dbReference>
<dbReference type="GO" id="GO:0030163">
    <property type="term" value="P:protein catabolic process"/>
    <property type="evidence" value="ECO:0000314"/>
    <property type="project" value="UniProtKB"/>
</dbReference>
<dbReference type="GO" id="GO:0051604">
    <property type="term" value="P:protein maturation"/>
    <property type="evidence" value="ECO:0000314"/>
    <property type="project" value="UniProtKB"/>
</dbReference>
<dbReference type="GO" id="GO:0016485">
    <property type="term" value="P:protein processing"/>
    <property type="evidence" value="ECO:0000250"/>
    <property type="project" value="UniProtKB"/>
</dbReference>
<dbReference type="GO" id="GO:0006508">
    <property type="term" value="P:proteolysis"/>
    <property type="evidence" value="ECO:0000314"/>
    <property type="project" value="UniProtKB"/>
</dbReference>
<dbReference type="GO" id="GO:0110097">
    <property type="term" value="P:regulation of calcium import into the mitochondrion"/>
    <property type="evidence" value="ECO:0000314"/>
    <property type="project" value="UniProtKB"/>
</dbReference>
<dbReference type="GO" id="GO:0040014">
    <property type="term" value="P:regulation of multicellular organism growth"/>
    <property type="evidence" value="ECO:0007669"/>
    <property type="project" value="Ensembl"/>
</dbReference>
<dbReference type="GO" id="GO:0060013">
    <property type="term" value="P:righting reflex"/>
    <property type="evidence" value="ECO:0007669"/>
    <property type="project" value="Ensembl"/>
</dbReference>
<dbReference type="CDD" id="cd19501">
    <property type="entry name" value="RecA-like_FtsH"/>
    <property type="match status" value="1"/>
</dbReference>
<dbReference type="FunFam" id="1.10.8.60:FF:000019">
    <property type="entry name" value="AFG3-like AAA ATPase 2"/>
    <property type="match status" value="1"/>
</dbReference>
<dbReference type="FunFam" id="1.20.58.760:FF:000003">
    <property type="entry name" value="AFG3-like AAA ATPase 2"/>
    <property type="match status" value="1"/>
</dbReference>
<dbReference type="FunFam" id="3.40.1690.20:FF:000001">
    <property type="entry name" value="AFG3-like AAA ATPase 2"/>
    <property type="match status" value="1"/>
</dbReference>
<dbReference type="FunFam" id="3.40.50.300:FF:000001">
    <property type="entry name" value="ATP-dependent zinc metalloprotease FtsH"/>
    <property type="match status" value="1"/>
</dbReference>
<dbReference type="Gene3D" id="1.10.8.60">
    <property type="match status" value="1"/>
</dbReference>
<dbReference type="Gene3D" id="3.40.1690.20">
    <property type="match status" value="1"/>
</dbReference>
<dbReference type="Gene3D" id="3.40.50.300">
    <property type="entry name" value="P-loop containing nucleotide triphosphate hydrolases"/>
    <property type="match status" value="1"/>
</dbReference>
<dbReference type="Gene3D" id="1.20.58.760">
    <property type="entry name" value="Peptidase M41"/>
    <property type="match status" value="1"/>
</dbReference>
<dbReference type="HAMAP" id="MF_01458">
    <property type="entry name" value="FtsH"/>
    <property type="match status" value="1"/>
</dbReference>
<dbReference type="InterPro" id="IPR003593">
    <property type="entry name" value="AAA+_ATPase"/>
</dbReference>
<dbReference type="InterPro" id="IPR041569">
    <property type="entry name" value="AAA_lid_3"/>
</dbReference>
<dbReference type="InterPro" id="IPR050928">
    <property type="entry name" value="ATP-dep_Zn_Metalloprotease"/>
</dbReference>
<dbReference type="InterPro" id="IPR003959">
    <property type="entry name" value="ATPase_AAA_core"/>
</dbReference>
<dbReference type="InterPro" id="IPR003960">
    <property type="entry name" value="ATPase_AAA_CS"/>
</dbReference>
<dbReference type="InterPro" id="IPR005936">
    <property type="entry name" value="FtsH"/>
</dbReference>
<dbReference type="InterPro" id="IPR027417">
    <property type="entry name" value="P-loop_NTPase"/>
</dbReference>
<dbReference type="InterPro" id="IPR011546">
    <property type="entry name" value="Pept_M41_FtsH_extracell"/>
</dbReference>
<dbReference type="InterPro" id="IPR000642">
    <property type="entry name" value="Peptidase_M41"/>
</dbReference>
<dbReference type="InterPro" id="IPR037219">
    <property type="entry name" value="Peptidase_M41-like"/>
</dbReference>
<dbReference type="NCBIfam" id="TIGR01241">
    <property type="entry name" value="FtsH_fam"/>
    <property type="match status" value="1"/>
</dbReference>
<dbReference type="PANTHER" id="PTHR43655:SF9">
    <property type="entry name" value="AFG3-LIKE PROTEIN 2"/>
    <property type="match status" value="1"/>
</dbReference>
<dbReference type="PANTHER" id="PTHR43655">
    <property type="entry name" value="ATP-DEPENDENT PROTEASE"/>
    <property type="match status" value="1"/>
</dbReference>
<dbReference type="Pfam" id="PF00004">
    <property type="entry name" value="AAA"/>
    <property type="match status" value="1"/>
</dbReference>
<dbReference type="Pfam" id="PF17862">
    <property type="entry name" value="AAA_lid_3"/>
    <property type="match status" value="1"/>
</dbReference>
<dbReference type="Pfam" id="PF06480">
    <property type="entry name" value="FtsH_ext"/>
    <property type="match status" value="1"/>
</dbReference>
<dbReference type="Pfam" id="PF01434">
    <property type="entry name" value="Peptidase_M41"/>
    <property type="match status" value="1"/>
</dbReference>
<dbReference type="SMART" id="SM00382">
    <property type="entry name" value="AAA"/>
    <property type="match status" value="1"/>
</dbReference>
<dbReference type="SUPFAM" id="SSF140990">
    <property type="entry name" value="FtsH protease domain-like"/>
    <property type="match status" value="1"/>
</dbReference>
<dbReference type="SUPFAM" id="SSF52540">
    <property type="entry name" value="P-loop containing nucleoside triphosphate hydrolases"/>
    <property type="match status" value="1"/>
</dbReference>
<dbReference type="PROSITE" id="PS00674">
    <property type="entry name" value="AAA"/>
    <property type="match status" value="1"/>
</dbReference>
<evidence type="ECO:0000250" key="1">
    <source>
        <dbReference type="UniProtKB" id="Q8JZQ2"/>
    </source>
</evidence>
<evidence type="ECO:0000255" key="2"/>
<evidence type="ECO:0000256" key="3">
    <source>
        <dbReference type="SAM" id="MobiDB-lite"/>
    </source>
</evidence>
<evidence type="ECO:0000269" key="4">
    <source>
    </source>
</evidence>
<evidence type="ECO:0000269" key="5">
    <source>
    </source>
</evidence>
<evidence type="ECO:0000269" key="6">
    <source>
    </source>
</evidence>
<evidence type="ECO:0000269" key="7">
    <source>
    </source>
</evidence>
<evidence type="ECO:0000269" key="8">
    <source>
    </source>
</evidence>
<evidence type="ECO:0000269" key="9">
    <source>
    </source>
</evidence>
<evidence type="ECO:0000269" key="10">
    <source>
    </source>
</evidence>
<evidence type="ECO:0000269" key="11">
    <source>
    </source>
</evidence>
<evidence type="ECO:0000269" key="12">
    <source>
    </source>
</evidence>
<evidence type="ECO:0000269" key="13">
    <source>
    </source>
</evidence>
<evidence type="ECO:0000269" key="14">
    <source>
    </source>
</evidence>
<evidence type="ECO:0000269" key="15">
    <source>
    </source>
</evidence>
<evidence type="ECO:0000269" key="16">
    <source>
    </source>
</evidence>
<evidence type="ECO:0000269" key="17">
    <source>
    </source>
</evidence>
<evidence type="ECO:0000269" key="18">
    <source>
    </source>
</evidence>
<evidence type="ECO:0000269" key="19">
    <source>
    </source>
</evidence>
<evidence type="ECO:0000269" key="20">
    <source>
    </source>
</evidence>
<evidence type="ECO:0000269" key="21">
    <source>
    </source>
</evidence>
<evidence type="ECO:0000269" key="22">
    <source>
    </source>
</evidence>
<evidence type="ECO:0000269" key="23">
    <source>
    </source>
</evidence>
<evidence type="ECO:0000269" key="24">
    <source>
    </source>
</evidence>
<evidence type="ECO:0000269" key="25">
    <source>
    </source>
</evidence>
<evidence type="ECO:0000269" key="26">
    <source>
    </source>
</evidence>
<evidence type="ECO:0000269" key="27">
    <source>
    </source>
</evidence>
<evidence type="ECO:0000269" key="28">
    <source>
    </source>
</evidence>
<evidence type="ECO:0000269" key="29">
    <source>
    </source>
</evidence>
<evidence type="ECO:0000269" key="30">
    <source>
    </source>
</evidence>
<evidence type="ECO:0000269" key="31">
    <source>
    </source>
</evidence>
<evidence type="ECO:0000269" key="32">
    <source>
    </source>
</evidence>
<evidence type="ECO:0000269" key="33">
    <source>
    </source>
</evidence>
<evidence type="ECO:0000269" key="34">
    <source>
    </source>
</evidence>
<evidence type="ECO:0000269" key="35">
    <source>
    </source>
</evidence>
<evidence type="ECO:0000269" key="36">
    <source>
    </source>
</evidence>
<evidence type="ECO:0000269" key="37">
    <source>
    </source>
</evidence>
<evidence type="ECO:0000269" key="38">
    <source>
    </source>
</evidence>
<evidence type="ECO:0000269" key="39">
    <source>
    </source>
</evidence>
<evidence type="ECO:0000269" key="40">
    <source>
    </source>
</evidence>
<evidence type="ECO:0000269" key="41">
    <source>
    </source>
</evidence>
<evidence type="ECO:0000269" key="42">
    <source>
    </source>
</evidence>
<evidence type="ECO:0000303" key="43">
    <source>
    </source>
</evidence>
<evidence type="ECO:0000305" key="44"/>
<evidence type="ECO:0000305" key="45">
    <source>
    </source>
</evidence>
<evidence type="ECO:0000305" key="46">
    <source>
    </source>
</evidence>
<evidence type="ECO:0000305" key="47">
    <source>
    </source>
</evidence>
<evidence type="ECO:0000312" key="48">
    <source>
        <dbReference type="HGNC" id="HGNC:315"/>
    </source>
</evidence>
<evidence type="ECO:0007744" key="49">
    <source>
        <dbReference type="PDB" id="2LNA"/>
    </source>
</evidence>
<evidence type="ECO:0007744" key="50">
    <source>
        <dbReference type="PDB" id="6NYY"/>
    </source>
</evidence>
<evidence type="ECO:0007829" key="51">
    <source>
        <dbReference type="PDB" id="2LNA"/>
    </source>
</evidence>
<evidence type="ECO:0007829" key="52">
    <source>
        <dbReference type="PDB" id="6NYY"/>
    </source>
</evidence>
<accession>Q9Y4W6</accession>
<accession>Q6P1L0</accession>